<accession>A1RPD0</accession>
<sequence length="302" mass="34208">MGDMSDLEVTCLQDYERYLHSERQLSAHTVHNYLYELNRVSTLLPKDVTLLNVGREHWQQVLAKLHRKGLSPRSLSLCLSAIKQWGEFLLREGMIAVNPAKGLSAPKQAKPLPKNMDVDSLTHLLEIEGTDPLTLRDKAMMELFYSSGLRLAELAALNLSSVQYDLREVRVLGKGNKERIVPVGSYAIKALEAWLVCRQQIPCEDCALFVTGKGRRLSHRSIQSRMAKWGQEQALSVRVHPHKLRHSFATHMLESSADLRAVQELLGHANLSTTQIYTSLDFQHLAKVYDSAHPRAKKQQDK</sequence>
<dbReference type="EMBL" id="CP000503">
    <property type="protein sequence ID" value="ABM26525.1"/>
    <property type="molecule type" value="Genomic_DNA"/>
</dbReference>
<dbReference type="RefSeq" id="WP_011790956.1">
    <property type="nucleotide sequence ID" value="NC_008750.1"/>
</dbReference>
<dbReference type="SMR" id="A1RPD0"/>
<dbReference type="GeneID" id="67445072"/>
<dbReference type="KEGG" id="shw:Sputw3181_3719"/>
<dbReference type="HOGENOM" id="CLU_027562_9_0_6"/>
<dbReference type="Proteomes" id="UP000002597">
    <property type="component" value="Chromosome"/>
</dbReference>
<dbReference type="GO" id="GO:0005737">
    <property type="term" value="C:cytoplasm"/>
    <property type="evidence" value="ECO:0007669"/>
    <property type="project" value="UniProtKB-SubCell"/>
</dbReference>
<dbReference type="GO" id="GO:0003677">
    <property type="term" value="F:DNA binding"/>
    <property type="evidence" value="ECO:0007669"/>
    <property type="project" value="UniProtKB-KW"/>
</dbReference>
<dbReference type="GO" id="GO:0009037">
    <property type="term" value="F:tyrosine-based site-specific recombinase activity"/>
    <property type="evidence" value="ECO:0007669"/>
    <property type="project" value="UniProtKB-UniRule"/>
</dbReference>
<dbReference type="GO" id="GO:0051301">
    <property type="term" value="P:cell division"/>
    <property type="evidence" value="ECO:0007669"/>
    <property type="project" value="UniProtKB-KW"/>
</dbReference>
<dbReference type="GO" id="GO:0007059">
    <property type="term" value="P:chromosome segregation"/>
    <property type="evidence" value="ECO:0007669"/>
    <property type="project" value="UniProtKB-UniRule"/>
</dbReference>
<dbReference type="GO" id="GO:0006313">
    <property type="term" value="P:DNA transposition"/>
    <property type="evidence" value="ECO:0007669"/>
    <property type="project" value="UniProtKB-UniRule"/>
</dbReference>
<dbReference type="CDD" id="cd00798">
    <property type="entry name" value="INT_XerDC_C"/>
    <property type="match status" value="1"/>
</dbReference>
<dbReference type="Gene3D" id="1.10.150.130">
    <property type="match status" value="1"/>
</dbReference>
<dbReference type="Gene3D" id="1.10.443.10">
    <property type="entry name" value="Intergrase catalytic core"/>
    <property type="match status" value="1"/>
</dbReference>
<dbReference type="HAMAP" id="MF_01808">
    <property type="entry name" value="Recomb_XerC_XerD"/>
    <property type="match status" value="1"/>
</dbReference>
<dbReference type="InterPro" id="IPR044068">
    <property type="entry name" value="CB"/>
</dbReference>
<dbReference type="InterPro" id="IPR011010">
    <property type="entry name" value="DNA_brk_join_enz"/>
</dbReference>
<dbReference type="InterPro" id="IPR013762">
    <property type="entry name" value="Integrase-like_cat_sf"/>
</dbReference>
<dbReference type="InterPro" id="IPR002104">
    <property type="entry name" value="Integrase_catalytic"/>
</dbReference>
<dbReference type="InterPro" id="IPR010998">
    <property type="entry name" value="Integrase_recombinase_N"/>
</dbReference>
<dbReference type="InterPro" id="IPR004107">
    <property type="entry name" value="Integrase_SAM-like_N"/>
</dbReference>
<dbReference type="InterPro" id="IPR011931">
    <property type="entry name" value="Recomb_XerC"/>
</dbReference>
<dbReference type="InterPro" id="IPR023009">
    <property type="entry name" value="Tyrosine_recombinase_XerC/XerD"/>
</dbReference>
<dbReference type="InterPro" id="IPR050090">
    <property type="entry name" value="Tyrosine_recombinase_XerCD"/>
</dbReference>
<dbReference type="NCBIfam" id="TIGR02224">
    <property type="entry name" value="recomb_XerC"/>
    <property type="match status" value="1"/>
</dbReference>
<dbReference type="PANTHER" id="PTHR30349">
    <property type="entry name" value="PHAGE INTEGRASE-RELATED"/>
    <property type="match status" value="1"/>
</dbReference>
<dbReference type="PANTHER" id="PTHR30349:SF81">
    <property type="entry name" value="TYROSINE RECOMBINASE XERC"/>
    <property type="match status" value="1"/>
</dbReference>
<dbReference type="Pfam" id="PF02899">
    <property type="entry name" value="Phage_int_SAM_1"/>
    <property type="match status" value="1"/>
</dbReference>
<dbReference type="Pfam" id="PF00589">
    <property type="entry name" value="Phage_integrase"/>
    <property type="match status" value="1"/>
</dbReference>
<dbReference type="SUPFAM" id="SSF56349">
    <property type="entry name" value="DNA breaking-rejoining enzymes"/>
    <property type="match status" value="1"/>
</dbReference>
<dbReference type="PROSITE" id="PS51900">
    <property type="entry name" value="CB"/>
    <property type="match status" value="1"/>
</dbReference>
<dbReference type="PROSITE" id="PS51898">
    <property type="entry name" value="TYR_RECOMBINASE"/>
    <property type="match status" value="1"/>
</dbReference>
<comment type="function">
    <text evidence="1">Site-specific tyrosine recombinase, which acts by catalyzing the cutting and rejoining of the recombining DNA molecules. The XerC-XerD complex is essential to convert dimers of the bacterial chromosome into monomers to permit their segregation at cell division. It also contributes to the segregational stability of plasmids.</text>
</comment>
<comment type="subunit">
    <text evidence="1">Forms a cyclic heterotetrameric complex composed of two molecules of XerC and two molecules of XerD.</text>
</comment>
<comment type="subcellular location">
    <subcellularLocation>
        <location evidence="1">Cytoplasm</location>
    </subcellularLocation>
</comment>
<comment type="similarity">
    <text evidence="1">Belongs to the 'phage' integrase family. XerC subfamily.</text>
</comment>
<evidence type="ECO:0000255" key="1">
    <source>
        <dbReference type="HAMAP-Rule" id="MF_01808"/>
    </source>
</evidence>
<evidence type="ECO:0000255" key="2">
    <source>
        <dbReference type="PROSITE-ProRule" id="PRU01246"/>
    </source>
</evidence>
<evidence type="ECO:0000255" key="3">
    <source>
        <dbReference type="PROSITE-ProRule" id="PRU01248"/>
    </source>
</evidence>
<keyword id="KW-0131">Cell cycle</keyword>
<keyword id="KW-0132">Cell division</keyword>
<keyword id="KW-0159">Chromosome partition</keyword>
<keyword id="KW-0963">Cytoplasm</keyword>
<keyword id="KW-0229">DNA integration</keyword>
<keyword id="KW-0233">DNA recombination</keyword>
<keyword id="KW-0238">DNA-binding</keyword>
<proteinExistence type="inferred from homology"/>
<organism>
    <name type="scientific">Shewanella sp. (strain W3-18-1)</name>
    <dbReference type="NCBI Taxonomy" id="351745"/>
    <lineage>
        <taxon>Bacteria</taxon>
        <taxon>Pseudomonadati</taxon>
        <taxon>Pseudomonadota</taxon>
        <taxon>Gammaproteobacteria</taxon>
        <taxon>Alteromonadales</taxon>
        <taxon>Shewanellaceae</taxon>
        <taxon>Shewanella</taxon>
    </lineage>
</organism>
<name>XERC_SHESW</name>
<reference key="1">
    <citation type="submission" date="2006-12" db="EMBL/GenBank/DDBJ databases">
        <title>Complete sequence of Shewanella sp. W3-18-1.</title>
        <authorList>
            <consortium name="US DOE Joint Genome Institute"/>
            <person name="Copeland A."/>
            <person name="Lucas S."/>
            <person name="Lapidus A."/>
            <person name="Barry K."/>
            <person name="Detter J.C."/>
            <person name="Glavina del Rio T."/>
            <person name="Hammon N."/>
            <person name="Israni S."/>
            <person name="Dalin E."/>
            <person name="Tice H."/>
            <person name="Pitluck S."/>
            <person name="Chain P."/>
            <person name="Malfatti S."/>
            <person name="Shin M."/>
            <person name="Vergez L."/>
            <person name="Schmutz J."/>
            <person name="Larimer F."/>
            <person name="Land M."/>
            <person name="Hauser L."/>
            <person name="Kyrpides N."/>
            <person name="Lykidis A."/>
            <person name="Tiedje J."/>
            <person name="Richardson P."/>
        </authorList>
    </citation>
    <scope>NUCLEOTIDE SEQUENCE [LARGE SCALE GENOMIC DNA]</scope>
    <source>
        <strain>W3-18-1</strain>
    </source>
</reference>
<gene>
    <name evidence="1" type="primary">xerC</name>
    <name type="ordered locus">Sputw3181_3719</name>
</gene>
<protein>
    <recommendedName>
        <fullName evidence="1">Tyrosine recombinase XerC</fullName>
    </recommendedName>
</protein>
<feature type="chain" id="PRO_1000070038" description="Tyrosine recombinase XerC">
    <location>
        <begin position="1"/>
        <end position="302"/>
    </location>
</feature>
<feature type="domain" description="Core-binding (CB)" evidence="3">
    <location>
        <begin position="6"/>
        <end position="90"/>
    </location>
</feature>
<feature type="domain" description="Tyr recombinase" evidence="2">
    <location>
        <begin position="111"/>
        <end position="290"/>
    </location>
</feature>
<feature type="active site" evidence="1">
    <location>
        <position position="150"/>
    </location>
</feature>
<feature type="active site" evidence="1">
    <location>
        <position position="174"/>
    </location>
</feature>
<feature type="active site" evidence="1">
    <location>
        <position position="242"/>
    </location>
</feature>
<feature type="active site" evidence="1">
    <location>
        <position position="245"/>
    </location>
</feature>
<feature type="active site" evidence="1">
    <location>
        <position position="268"/>
    </location>
</feature>
<feature type="active site" description="O-(3'-phospho-DNA)-tyrosine intermediate" evidence="1">
    <location>
        <position position="277"/>
    </location>
</feature>